<proteinExistence type="inferred from homology"/>
<evidence type="ECO:0000250" key="1"/>
<evidence type="ECO:0000255" key="2"/>
<evidence type="ECO:0000305" key="3"/>
<keyword id="KW-1003">Cell membrane</keyword>
<keyword id="KW-0186">Copper</keyword>
<keyword id="KW-0249">Electron transport</keyword>
<keyword id="KW-0349">Heme</keyword>
<keyword id="KW-0375">Hydrogen ion transport</keyword>
<keyword id="KW-0406">Ion transport</keyword>
<keyword id="KW-0408">Iron</keyword>
<keyword id="KW-0472">Membrane</keyword>
<keyword id="KW-0479">Metal-binding</keyword>
<keyword id="KW-0560">Oxidoreductase</keyword>
<keyword id="KW-0679">Respiratory chain</keyword>
<keyword id="KW-0812">Transmembrane</keyword>
<keyword id="KW-1133">Transmembrane helix</keyword>
<keyword id="KW-0813">Transport</keyword>
<protein>
    <recommendedName>
        <fullName>Probable quinol oxidase subunit 1</fullName>
        <ecNumber>1.10.3.-</ecNumber>
    </recommendedName>
    <alternativeName>
        <fullName>Quinol oxidase polypeptide I</fullName>
    </alternativeName>
</protein>
<accession>Q2FI18</accession>
<dbReference type="EC" id="1.10.3.-"/>
<dbReference type="EMBL" id="CP000255">
    <property type="protein sequence ID" value="ABD21765.1"/>
    <property type="molecule type" value="Genomic_DNA"/>
</dbReference>
<dbReference type="RefSeq" id="WP_001010762.1">
    <property type="nucleotide sequence ID" value="NZ_CP027476.1"/>
</dbReference>
<dbReference type="SMR" id="Q2FI18"/>
<dbReference type="KEGG" id="saa:SAUSA300_0962"/>
<dbReference type="HOGENOM" id="CLU_011899_7_1_9"/>
<dbReference type="OMA" id="WAMMSIG"/>
<dbReference type="UniPathway" id="UPA00705"/>
<dbReference type="Proteomes" id="UP000001939">
    <property type="component" value="Chromosome"/>
</dbReference>
<dbReference type="GO" id="GO:0005886">
    <property type="term" value="C:plasma membrane"/>
    <property type="evidence" value="ECO:0007669"/>
    <property type="project" value="UniProtKB-SubCell"/>
</dbReference>
<dbReference type="GO" id="GO:0005507">
    <property type="term" value="F:copper ion binding"/>
    <property type="evidence" value="ECO:0007669"/>
    <property type="project" value="InterPro"/>
</dbReference>
<dbReference type="GO" id="GO:0004129">
    <property type="term" value="F:cytochrome-c oxidase activity"/>
    <property type="evidence" value="ECO:0007669"/>
    <property type="project" value="InterPro"/>
</dbReference>
<dbReference type="GO" id="GO:0020037">
    <property type="term" value="F:heme binding"/>
    <property type="evidence" value="ECO:0007669"/>
    <property type="project" value="InterPro"/>
</dbReference>
<dbReference type="GO" id="GO:0016682">
    <property type="term" value="F:oxidoreductase activity, acting on diphenols and related substances as donors, oxygen as acceptor"/>
    <property type="evidence" value="ECO:0007669"/>
    <property type="project" value="InterPro"/>
</dbReference>
<dbReference type="GO" id="GO:0015990">
    <property type="term" value="P:electron transport coupled proton transport"/>
    <property type="evidence" value="ECO:0007669"/>
    <property type="project" value="TreeGrafter"/>
</dbReference>
<dbReference type="GO" id="GO:0006119">
    <property type="term" value="P:oxidative phosphorylation"/>
    <property type="evidence" value="ECO:0007669"/>
    <property type="project" value="UniProtKB-UniPathway"/>
</dbReference>
<dbReference type="GO" id="GO:0022904">
    <property type="term" value="P:respiratory electron transport chain"/>
    <property type="evidence" value="ECO:0007669"/>
    <property type="project" value="TreeGrafter"/>
</dbReference>
<dbReference type="CDD" id="cd01662">
    <property type="entry name" value="Ubiquinol_Oxidase_I"/>
    <property type="match status" value="1"/>
</dbReference>
<dbReference type="FunFam" id="1.20.210.10:FF:000002">
    <property type="entry name" value="Cytochrome o ubiquinol oxidase, subunit I"/>
    <property type="match status" value="1"/>
</dbReference>
<dbReference type="Gene3D" id="1.20.210.10">
    <property type="entry name" value="Cytochrome c oxidase-like, subunit I domain"/>
    <property type="match status" value="1"/>
</dbReference>
<dbReference type="InterPro" id="IPR023616">
    <property type="entry name" value="Cyt_c_oxase-like_su1_dom"/>
</dbReference>
<dbReference type="InterPro" id="IPR036927">
    <property type="entry name" value="Cyt_c_oxase-like_su1_sf"/>
</dbReference>
<dbReference type="InterPro" id="IPR000883">
    <property type="entry name" value="Cyt_C_Oxase_1"/>
</dbReference>
<dbReference type="InterPro" id="IPR023615">
    <property type="entry name" value="Cyt_c_Oxase_su1_BS"/>
</dbReference>
<dbReference type="InterPro" id="IPR014233">
    <property type="entry name" value="QoxB"/>
</dbReference>
<dbReference type="NCBIfam" id="TIGR02882">
    <property type="entry name" value="QoxB"/>
    <property type="match status" value="1"/>
</dbReference>
<dbReference type="PANTHER" id="PTHR10422:SF35">
    <property type="entry name" value="CYTOCHROME BO(3) UBIQUINOL OXIDASE SUBUNIT 1"/>
    <property type="match status" value="1"/>
</dbReference>
<dbReference type="PANTHER" id="PTHR10422">
    <property type="entry name" value="CYTOCHROME C OXIDASE SUBUNIT 1"/>
    <property type="match status" value="1"/>
</dbReference>
<dbReference type="Pfam" id="PF00115">
    <property type="entry name" value="COX1"/>
    <property type="match status" value="1"/>
</dbReference>
<dbReference type="PRINTS" id="PR01165">
    <property type="entry name" value="CYCOXIDASEI"/>
</dbReference>
<dbReference type="SUPFAM" id="SSF81442">
    <property type="entry name" value="Cytochrome c oxidase subunit I-like"/>
    <property type="match status" value="1"/>
</dbReference>
<dbReference type="PROSITE" id="PS50855">
    <property type="entry name" value="COX1"/>
    <property type="match status" value="1"/>
</dbReference>
<dbReference type="PROSITE" id="PS00077">
    <property type="entry name" value="COX1_CUB"/>
    <property type="match status" value="1"/>
</dbReference>
<feature type="chain" id="PRO_0000276749" description="Probable quinol oxidase subunit 1">
    <location>
        <begin position="1"/>
        <end position="662"/>
    </location>
</feature>
<feature type="transmembrane region" description="Helical" evidence="2">
    <location>
        <begin position="14"/>
        <end position="34"/>
    </location>
</feature>
<feature type="transmembrane region" description="Helical" evidence="2">
    <location>
        <begin position="58"/>
        <end position="78"/>
    </location>
</feature>
<feature type="transmembrane region" description="Helical" evidence="2">
    <location>
        <begin position="103"/>
        <end position="123"/>
    </location>
</feature>
<feature type="transmembrane region" description="Helical" evidence="2">
    <location>
        <begin position="140"/>
        <end position="160"/>
    </location>
</feature>
<feature type="transmembrane region" description="Helical" evidence="2">
    <location>
        <begin position="187"/>
        <end position="207"/>
    </location>
</feature>
<feature type="transmembrane region" description="Helical" evidence="2">
    <location>
        <begin position="228"/>
        <end position="248"/>
    </location>
</feature>
<feature type="transmembrane region" description="Helical" evidence="2">
    <location>
        <begin position="273"/>
        <end position="293"/>
    </location>
</feature>
<feature type="transmembrane region" description="Helical" evidence="2">
    <location>
        <begin position="311"/>
        <end position="331"/>
    </location>
</feature>
<feature type="transmembrane region" description="Helical" evidence="2">
    <location>
        <begin position="336"/>
        <end position="356"/>
    </location>
</feature>
<feature type="transmembrane region" description="Helical" evidence="2">
    <location>
        <begin position="376"/>
        <end position="396"/>
    </location>
</feature>
<feature type="transmembrane region" description="Helical" evidence="2">
    <location>
        <begin position="415"/>
        <end position="435"/>
    </location>
</feature>
<feature type="transmembrane region" description="Helical" evidence="2">
    <location>
        <begin position="451"/>
        <end position="471"/>
    </location>
</feature>
<feature type="transmembrane region" description="Helical" evidence="2">
    <location>
        <begin position="493"/>
        <end position="513"/>
    </location>
</feature>
<feature type="transmembrane region" description="Helical" evidence="2">
    <location>
        <begin position="587"/>
        <end position="604"/>
    </location>
</feature>
<feature type="transmembrane region" description="Helical" evidence="2">
    <location>
        <begin position="608"/>
        <end position="627"/>
    </location>
</feature>
<feature type="binding site" description="axial binding residue" evidence="1">
    <location>
        <position position="102"/>
    </location>
    <ligand>
        <name>Fe(II)-heme a</name>
        <dbReference type="ChEBI" id="CHEBI:61715"/>
    </ligand>
    <ligandPart>
        <name>Fe</name>
        <dbReference type="ChEBI" id="CHEBI:18248"/>
    </ligandPart>
</feature>
<feature type="binding site" evidence="1">
    <location>
        <position position="279"/>
    </location>
    <ligand>
        <name>Cu cation</name>
        <dbReference type="ChEBI" id="CHEBI:23378"/>
        <label>B</label>
    </ligand>
</feature>
<feature type="binding site" evidence="1">
    <location>
        <position position="283"/>
    </location>
    <ligand>
        <name>Cu cation</name>
        <dbReference type="ChEBI" id="CHEBI:23378"/>
        <label>B</label>
    </ligand>
</feature>
<feature type="binding site" evidence="1">
    <location>
        <position position="328"/>
    </location>
    <ligand>
        <name>Cu cation</name>
        <dbReference type="ChEBI" id="CHEBI:23378"/>
        <label>B</label>
    </ligand>
</feature>
<feature type="binding site" evidence="1">
    <location>
        <position position="329"/>
    </location>
    <ligand>
        <name>Cu cation</name>
        <dbReference type="ChEBI" id="CHEBI:23378"/>
        <label>B</label>
    </ligand>
</feature>
<feature type="binding site" description="axial binding residue" evidence="1">
    <location>
        <position position="414"/>
    </location>
    <ligand>
        <name>heme a3</name>
        <dbReference type="ChEBI" id="CHEBI:83282"/>
    </ligand>
    <ligandPart>
        <name>Fe</name>
        <dbReference type="ChEBI" id="CHEBI:18248"/>
    </ligandPart>
</feature>
<feature type="binding site" description="axial binding residue" evidence="1">
    <location>
        <position position="416"/>
    </location>
    <ligand>
        <name>Fe(II)-heme a</name>
        <dbReference type="ChEBI" id="CHEBI:61715"/>
    </ligand>
    <ligandPart>
        <name>Fe</name>
        <dbReference type="ChEBI" id="CHEBI:18248"/>
    </ligandPart>
</feature>
<feature type="cross-link" description="1'-histidyl-3'-tyrosine (His-Tyr)" evidence="1">
    <location>
        <begin position="279"/>
        <end position="283"/>
    </location>
</feature>
<organism>
    <name type="scientific">Staphylococcus aureus (strain USA300)</name>
    <dbReference type="NCBI Taxonomy" id="367830"/>
    <lineage>
        <taxon>Bacteria</taxon>
        <taxon>Bacillati</taxon>
        <taxon>Bacillota</taxon>
        <taxon>Bacilli</taxon>
        <taxon>Bacillales</taxon>
        <taxon>Staphylococcaceae</taxon>
        <taxon>Staphylococcus</taxon>
    </lineage>
</organism>
<sequence>MNFPWDQLLVKGNWMITMAQIGAPFLVIGLIAVITYFKLWKYLYKEWFTSVDHKKIGIMYLICAVLMFVRGGIDALLIRAQLTVPDNKFLESNHYNEIFSTHGVIMIIFMAMPFIFGLWNIVVPLQIGARDVAFPVLNNVSFWLFFAGMILFNLSFIIGGSPAAGWTNYAPLAGEFSPGPGVNYYLIAIQISGLGTLATGINFFVTILRCKTPTMKFMQMPMFTVTTFITTLIVILAFPPLTVALALMTTDRIFDTAFFTVAHGGMPMLWANFFWVWGHPEVYIVILPAFGIYSEIIPTFARKRLFGHQSMVWATAGIAFLSFLVWVHHFFTMGNGALINSFFSISTMLIGIPTGVKLFNWLLTLYKGRITFESPMLFSLAFIPNFLLGGVTGVMLAMASADYQYHNTYFLVAHFHYTLVTGVVFACLAGLIFWYPKMMGYKLNETLNKWCFWFFMIGFNVCFLPQFILGLDGMPRRLYTYMPSDGWFLLNLISTIGALLMAIGFLFLVVSIVYSHFKSPREATGDNWDGLGRTLEWTTASAIPPKYNFAITPDWNDYDTFVDMKEHGRHYLDNHNYKDIHMPNNTPVGFWIGIFMTIGGFFLIFETVIPALICLFGIFGTMIYRSFQIDHGYHIPAAEVAETEARLREARIKEREAVSHES</sequence>
<comment type="function">
    <text evidence="1">Catalyzes quinol oxidation with the concomitant reduction of oxygen to water.</text>
</comment>
<comment type="catalytic activity">
    <reaction>
        <text>2 a quinol + O2 = 2 a quinone + 2 H2O</text>
        <dbReference type="Rhea" id="RHEA:55376"/>
        <dbReference type="ChEBI" id="CHEBI:15377"/>
        <dbReference type="ChEBI" id="CHEBI:15379"/>
        <dbReference type="ChEBI" id="CHEBI:24646"/>
        <dbReference type="ChEBI" id="CHEBI:132124"/>
    </reaction>
</comment>
<comment type="cofactor">
    <cofactor evidence="1">
        <name>Cu cation</name>
        <dbReference type="ChEBI" id="CHEBI:23378"/>
    </cofactor>
    <text evidence="1">Binds a copper B center.</text>
</comment>
<comment type="cofactor">
    <cofactor evidence="1">
        <name>ferriheme a</name>
        <dbReference type="ChEBI" id="CHEBI:60532"/>
    </cofactor>
</comment>
<comment type="cofactor">
    <text evidence="1">Heme A3.</text>
</comment>
<comment type="pathway">
    <text>Energy metabolism; oxidative phosphorylation.</text>
</comment>
<comment type="subcellular location">
    <subcellularLocation>
        <location evidence="1">Cell membrane</location>
        <topology evidence="1">Multi-pass membrane protein</topology>
    </subcellularLocation>
</comment>
<comment type="similarity">
    <text evidence="3">Belongs to the heme-copper respiratory oxidase family.</text>
</comment>
<name>QOX1_STAA3</name>
<gene>
    <name type="primary">qoxB</name>
    <name type="ordered locus">SAUSA300_0962</name>
</gene>
<reference key="1">
    <citation type="journal article" date="2006" name="Lancet">
        <title>Complete genome sequence of USA300, an epidemic clone of community-acquired meticillin-resistant Staphylococcus aureus.</title>
        <authorList>
            <person name="Diep B.A."/>
            <person name="Gill S.R."/>
            <person name="Chang R.F."/>
            <person name="Phan T.H."/>
            <person name="Chen J.H."/>
            <person name="Davidson M.G."/>
            <person name="Lin F."/>
            <person name="Lin J."/>
            <person name="Carleton H.A."/>
            <person name="Mongodin E.F."/>
            <person name="Sensabaugh G.F."/>
            <person name="Perdreau-Remington F."/>
        </authorList>
    </citation>
    <scope>NUCLEOTIDE SEQUENCE [LARGE SCALE GENOMIC DNA]</scope>
    <source>
        <strain>USA300</strain>
    </source>
</reference>